<evidence type="ECO:0000250" key="1"/>
<evidence type="ECO:0000250" key="2">
    <source>
        <dbReference type="UniProtKB" id="P00948"/>
    </source>
</evidence>
<evidence type="ECO:0000305" key="3"/>
<reference key="1">
    <citation type="journal article" date="1997" name="J. Bacteriol.">
        <title>Cloning and characterization of two catA genes in Acinetobacter lwoffii K24.</title>
        <authorList>
            <person name="Kim S.I."/>
            <person name="Leem S.-H."/>
            <person name="Choi J.-S."/>
            <person name="Chung Y.H."/>
            <person name="Kim S."/>
            <person name="Park Y.-M."/>
            <person name="Park Y.K."/>
            <person name="Lee Y.N."/>
            <person name="Ha K.-S."/>
        </authorList>
    </citation>
    <scope>NUCLEOTIDE SEQUENCE [GENOMIC DNA]</scope>
    <source>
        <strain>K24</strain>
    </source>
</reference>
<reference key="2">
    <citation type="journal article" date="1998" name="Biochem. Biophys. Res. Commun.">
        <title>Organization and transcriptional characterization of the cat1 gene cluster in Acinetobacter lwoffi K24.</title>
        <authorList>
            <person name="Kim S.I."/>
            <person name="Leem S.-H."/>
            <person name="Choi J.-S."/>
            <person name="Ha K.-S."/>
        </authorList>
    </citation>
    <scope>NUCLEOTIDE SEQUENCE [GENOMIC DNA]</scope>
    <source>
        <strain>K24</strain>
    </source>
</reference>
<organism>
    <name type="scientific">Acinetobacter lwoffii</name>
    <dbReference type="NCBI Taxonomy" id="28090"/>
    <lineage>
        <taxon>Bacteria</taxon>
        <taxon>Pseudomonadati</taxon>
        <taxon>Pseudomonadota</taxon>
        <taxon>Gammaproteobacteria</taxon>
        <taxon>Moraxellales</taxon>
        <taxon>Moraxellaceae</taxon>
        <taxon>Acinetobacter</taxon>
    </lineage>
</organism>
<protein>
    <recommendedName>
        <fullName>Muconolactone Delta-isomerase 1</fullName>
        <shortName>MIase 1</shortName>
        <ecNumber evidence="2">5.3.3.4</ecNumber>
    </recommendedName>
</protein>
<name>CATC1_ACILW</name>
<keyword id="KW-0058">Aromatic hydrocarbons catabolism</keyword>
<keyword id="KW-0413">Isomerase</keyword>
<gene>
    <name type="primary">catC1</name>
</gene>
<feature type="chain" id="PRO_0000089331" description="Muconolactone Delta-isomerase 1">
    <location>
        <begin position="1"/>
        <end position="96"/>
    </location>
</feature>
<sequence>MLFHVRMDVNIPDDMPVEVADEIKAREKAYSQALQKSGKWPHIWRLVGEYANYSIFDVESNAELHGILTGLPLFSYMKIEVTPLCRHPSSIRDDES</sequence>
<comment type="catalytic activity">
    <reaction evidence="2">
        <text>(S)-muconolactone = (4,5-dihydro-5-oxofuran-2-yl)-acetate</text>
        <dbReference type="Rhea" id="RHEA:12348"/>
        <dbReference type="ChEBI" id="CHEBI:58425"/>
        <dbReference type="ChEBI" id="CHEBI:58736"/>
        <dbReference type="EC" id="5.3.3.4"/>
    </reaction>
</comment>
<comment type="pathway">
    <text>Aromatic compound metabolism; beta-ketoadipate pathway; 5-oxo-4,5-dihydro-2-furylacetate from catechol: step 3/3.</text>
</comment>
<comment type="subunit">
    <text evidence="1">Homodecamer.</text>
</comment>
<comment type="similarity">
    <text evidence="3">Belongs to the muconolactone Delta-isomerase family.</text>
</comment>
<dbReference type="EC" id="5.3.3.4" evidence="2"/>
<dbReference type="EMBL" id="U77658">
    <property type="protein sequence ID" value="AAC46227.1"/>
    <property type="molecule type" value="Genomic_DNA"/>
</dbReference>
<dbReference type="PIR" id="JC5945">
    <property type="entry name" value="JC5945"/>
</dbReference>
<dbReference type="SMR" id="O33947"/>
<dbReference type="UniPathway" id="UPA00157">
    <property type="reaction ID" value="UER00260"/>
</dbReference>
<dbReference type="GO" id="GO:0016159">
    <property type="term" value="F:muconolactone delta-isomerase activity"/>
    <property type="evidence" value="ECO:0007669"/>
    <property type="project" value="UniProtKB-EC"/>
</dbReference>
<dbReference type="GO" id="GO:0042952">
    <property type="term" value="P:beta-ketoadipate pathway"/>
    <property type="evidence" value="ECO:0007669"/>
    <property type="project" value="UniProtKB-UniPathway"/>
</dbReference>
<dbReference type="Gene3D" id="3.30.70.1060">
    <property type="entry name" value="Dimeric alpha+beta barrel"/>
    <property type="match status" value="1"/>
</dbReference>
<dbReference type="InterPro" id="IPR011008">
    <property type="entry name" value="Dimeric_a/b-barrel"/>
</dbReference>
<dbReference type="InterPro" id="IPR026029">
    <property type="entry name" value="MLI_dom"/>
</dbReference>
<dbReference type="InterPro" id="IPR003464">
    <property type="entry name" value="Muconolactone_d_Isoase"/>
</dbReference>
<dbReference type="NCBIfam" id="TIGR03221">
    <property type="entry name" value="muco_delta"/>
    <property type="match status" value="1"/>
</dbReference>
<dbReference type="Pfam" id="PF02426">
    <property type="entry name" value="MIase"/>
    <property type="match status" value="1"/>
</dbReference>
<dbReference type="PIRSF" id="PIRSF001486">
    <property type="entry name" value="CatC"/>
    <property type="match status" value="1"/>
</dbReference>
<dbReference type="SUPFAM" id="SSF54909">
    <property type="entry name" value="Dimeric alpha+beta barrel"/>
    <property type="match status" value="1"/>
</dbReference>
<proteinExistence type="inferred from homology"/>
<accession>O33947</accession>